<comment type="function">
    <text evidence="6 8 9">Transcription factor that binds 5'-AACGG-3' motifs in gene promoters (PubMed:21862669). Involved in the regulation of cytokinesis, probably via the activation of several G2/M phase-specific genes transcription (e.g. KNOLLE) (PubMed:17287251, PubMed:21862669, PubMed:25806785). Required for the maintenance of diploidy (PubMed:21862669).</text>
</comment>
<comment type="function">
    <text evidence="7">Involved in transcription regulation during induced endoreduplication at the powdery mildew (e.g. G.orontii) infection site, thus promoting G.orontii growth and reproduction.</text>
</comment>
<comment type="subunit">
    <text evidence="10">Component of a DREAM-like complex which modulates a variety of developmentally regulated genes and of the mitotic genes in proliferating and differentiated cells. Associates with CDKA-1, RBR1 and E2FB, but not with E2FC, in proliferating cells, at early stages of leaves development.</text>
</comment>
<comment type="subcellular location">
    <subcellularLocation>
        <location evidence="1 2">Nucleus</location>
    </subcellularLocation>
</comment>
<comment type="alternative products">
    <event type="alternative splicing"/>
    <isoform>
        <id>Q94FL9-1</id>
        <name>1</name>
        <sequence type="displayed"/>
    </isoform>
    <text evidence="13">Additional isoforms seem to exist.</text>
</comment>
<comment type="tissue specificity">
    <text evidence="6">Expressed in roots, cotyledons and leaves, especially in vascular tissues, and in flowers.</text>
</comment>
<comment type="developmental stage">
    <text evidence="4 6 10">Expressed in the root quiescent center (PubMed:15937229). Accumulates in division zone of primary root tips and emerging lateral roots. Also present in floral organs in young flower buds. Weakly and uniformly present in the developing embryo and maternal tissues (PubMed:17287251). Expressed specifically in proliferating stage of leaves (PubMed:26069325).</text>
</comment>
<comment type="induction">
    <text evidence="5 6">Slightly induced by salicylic acid (SA) (PubMed:16463103). Expressed in a cell cycle-dependent manner, with highest levels 2 hours before the peak of mitotic index in cells synchronized by aphidicolin. Activated by CYCB1 (PubMed:17287251). Accumulates at powdery mildew (e.g. G.orontii) infected cells.</text>
</comment>
<comment type="disruption phenotype">
    <text evidence="6 7 8 9">In EDC plants, defects of cytokinesis (PubMed:25806785). The double mutant myb3r1 myb3r4 often fails to complete cytokinesis, resulting in multinucleate cells with gapped walls and cell wall stubs in diverse tissues (e.g. in embryo during the first or second division after fertilization, in stomata guard mother cell) and several pleiotropic developmental defects, and associated with the selective reduction of several G2/M phase-specific genes transcript levels (e.g. CYCB2, CDC20.1 and KNOLLE). Hypersensitivity to caffeine, an inhibitor of cytokinesis (PubMed:17287251, PubMed:21862669). Impaired powdery mildew (e.g. G.orontii)-induced endoreduplication. Reduced G.orontii growth and reproduction leading to an enhanced resistance to powdery mildew (PubMed:20018666).</text>
</comment>
<comment type="sequence caution" evidence="13">
    <conflict type="erroneous gene model prediction">
        <sequence resource="EMBL-CDS" id="CAB87711"/>
    </conflict>
</comment>
<name>MB3R4_ARATH</name>
<proteinExistence type="evidence at protein level"/>
<sequence length="961" mass="108236">MEAESSTPQERIPKLRHGRTSGPARRSTRGQWTAEEDEILRKAVHSFKGKNWKKIAEYFKDRTDVQCLHRWQKVLNPELVKGPWTKEEDEMIVQLIEKYGPKKWSTIARFLPGRIGKQCRERWHNHLNPAINKEAWTQEEELLLIRAHQIYGNRWAELTKFLPGRSDNGIKNHWHSSVKKKLDSYMSSGLLDQYQAMPLAPYERSSTLQSTFMQSNIDGNGCLNGQAENEIDSRQNSSMVGCSLSARDFQNGTINIGHDFHPCGNSQENEQTAYHSEQFYYPELEDISVSISEVSYDMEDCSQFPDHNVSTSPSQDYQFDFQELSDISLEMRHNMSEIPMPYTKESKESTLGAPNSTLNIDVATYTNSANVLTPETECCRVLFPDQESEGHSVSRSLTQEPNEFNQVDRRDPILYSSASDRQISEATKSPTQSSSSRFTATAASGKGTLRPAPLIISPDKYSKKSSGLICHPFEVEPKCTTNGNGSFICIGDPSSSTCVDEGTNNSSEEDQSYHVNDPKKLVPVNDFASLAEDRPHSLPKHEPNMTNEQHHEDMGASSSLGFPSFDLPVFNCDLLQSKNDPLHDYSPLGIRKLLMSTMTCMSPLRLWESPTGKKTLVGAQSILRKRTRDLLTPLSEKRSDKKLEIDIAASLAKDFSRLDVMFDETENRQSNFGNSTGVIHGDRENHFHILNGDGEEWSGKPSSLFSHRMPEETMHIRKSLEKVDQICMEANVREKDDSEQDVENVEFFSGILSEHNTGKPVLSTPGQSVTKAEKAQVSTPRNQLQRTLMATSNKEHHSPSSVCLVINSPSRARNKEGHLVDNGTSNENFSIFCGTPFRRGLESPSAWKSPFYINSLLPSPRFDTDLTIEDMGYIFSPGERSYESIGVMTQINEHTSAFAAFADAMEVSISPTNDDARQKKELDKENNDPLLAERRVLDFNDCESPIKATEEVSSYLLKGCR</sequence>
<reference key="1">
    <citation type="journal article" date="2001" name="Curr. Opin. Plant Biol.">
        <title>The R2R3-MYB gene family in Arabidopsis thaliana.</title>
        <authorList>
            <person name="Stracke R."/>
            <person name="Werber M."/>
            <person name="Weisshaar B."/>
        </authorList>
    </citation>
    <scope>NUCLEOTIDE SEQUENCE [MRNA]</scope>
    <scope>GENE FAMILY</scope>
    <scope>NOMENCLATURE</scope>
    <source>
        <strain>cv. Columbia</strain>
    </source>
</reference>
<reference key="2">
    <citation type="submission" date="2004-01" db="EMBL/GenBank/DDBJ databases">
        <title>The MYB transcription factor family in Arabidopsis: A genome-wide cloning and expression pattern analysis.</title>
        <authorList>
            <person name="Qu L."/>
            <person name="Gu H."/>
        </authorList>
    </citation>
    <scope>NUCLEOTIDE SEQUENCE [MRNA]</scope>
</reference>
<reference key="3">
    <citation type="journal article" date="2000" name="Nature">
        <title>Sequence and analysis of chromosome 5 of the plant Arabidopsis thaliana.</title>
        <authorList>
            <person name="Tabata S."/>
            <person name="Kaneko T."/>
            <person name="Nakamura Y."/>
            <person name="Kotani H."/>
            <person name="Kato T."/>
            <person name="Asamizu E."/>
            <person name="Miyajima N."/>
            <person name="Sasamoto S."/>
            <person name="Kimura T."/>
            <person name="Hosouchi T."/>
            <person name="Kawashima K."/>
            <person name="Kohara M."/>
            <person name="Matsumoto M."/>
            <person name="Matsuno A."/>
            <person name="Muraki A."/>
            <person name="Nakayama S."/>
            <person name="Nakazaki N."/>
            <person name="Naruo K."/>
            <person name="Okumura S."/>
            <person name="Shinpo S."/>
            <person name="Takeuchi C."/>
            <person name="Wada T."/>
            <person name="Watanabe A."/>
            <person name="Yamada M."/>
            <person name="Yasuda M."/>
            <person name="Sato S."/>
            <person name="de la Bastide M."/>
            <person name="Huang E."/>
            <person name="Spiegel L."/>
            <person name="Gnoj L."/>
            <person name="O'Shaughnessy A."/>
            <person name="Preston R."/>
            <person name="Habermann K."/>
            <person name="Murray J."/>
            <person name="Johnson D."/>
            <person name="Rohlfing T."/>
            <person name="Nelson J."/>
            <person name="Stoneking T."/>
            <person name="Pepin K."/>
            <person name="Spieth J."/>
            <person name="Sekhon M."/>
            <person name="Armstrong J."/>
            <person name="Becker M."/>
            <person name="Belter E."/>
            <person name="Cordum H."/>
            <person name="Cordes M."/>
            <person name="Courtney L."/>
            <person name="Courtney W."/>
            <person name="Dante M."/>
            <person name="Du H."/>
            <person name="Edwards J."/>
            <person name="Fryman J."/>
            <person name="Haakensen B."/>
            <person name="Lamar E."/>
            <person name="Latreille P."/>
            <person name="Leonard S."/>
            <person name="Meyer R."/>
            <person name="Mulvaney E."/>
            <person name="Ozersky P."/>
            <person name="Riley A."/>
            <person name="Strowmatt C."/>
            <person name="Wagner-McPherson C."/>
            <person name="Wollam A."/>
            <person name="Yoakum M."/>
            <person name="Bell M."/>
            <person name="Dedhia N."/>
            <person name="Parnell L."/>
            <person name="Shah R."/>
            <person name="Rodriguez M."/>
            <person name="Hoon See L."/>
            <person name="Vil D."/>
            <person name="Baker J."/>
            <person name="Kirchoff K."/>
            <person name="Toth K."/>
            <person name="King L."/>
            <person name="Bahret A."/>
            <person name="Miller B."/>
            <person name="Marra M.A."/>
            <person name="Martienssen R."/>
            <person name="McCombie W.R."/>
            <person name="Wilson R.K."/>
            <person name="Murphy G."/>
            <person name="Bancroft I."/>
            <person name="Volckaert G."/>
            <person name="Wambutt R."/>
            <person name="Duesterhoeft A."/>
            <person name="Stiekema W."/>
            <person name="Pohl T."/>
            <person name="Entian K.-D."/>
            <person name="Terryn N."/>
            <person name="Hartley N."/>
            <person name="Bent E."/>
            <person name="Johnson S."/>
            <person name="Langham S.-A."/>
            <person name="McCullagh B."/>
            <person name="Robben J."/>
            <person name="Grymonprez B."/>
            <person name="Zimmermann W."/>
            <person name="Ramsperger U."/>
            <person name="Wedler H."/>
            <person name="Balke K."/>
            <person name="Wedler E."/>
            <person name="Peters S."/>
            <person name="van Staveren M."/>
            <person name="Dirkse W."/>
            <person name="Mooijman P."/>
            <person name="Klein Lankhorst R."/>
            <person name="Weitzenegger T."/>
            <person name="Bothe G."/>
            <person name="Rose M."/>
            <person name="Hauf J."/>
            <person name="Berneiser S."/>
            <person name="Hempel S."/>
            <person name="Feldpausch M."/>
            <person name="Lamberth S."/>
            <person name="Villarroel R."/>
            <person name="Gielen J."/>
            <person name="Ardiles W."/>
            <person name="Bents O."/>
            <person name="Lemcke K."/>
            <person name="Kolesov G."/>
            <person name="Mayer K.F.X."/>
            <person name="Rudd S."/>
            <person name="Schoof H."/>
            <person name="Schueller C."/>
            <person name="Zaccaria P."/>
            <person name="Mewes H.-W."/>
            <person name="Bevan M."/>
            <person name="Fransz P.F."/>
        </authorList>
    </citation>
    <scope>NUCLEOTIDE SEQUENCE [LARGE SCALE GENOMIC DNA]</scope>
    <source>
        <strain>cv. Columbia</strain>
    </source>
</reference>
<reference key="4">
    <citation type="journal article" date="2017" name="Plant J.">
        <title>Araport11: a complete reannotation of the Arabidopsis thaliana reference genome.</title>
        <authorList>
            <person name="Cheng C.Y."/>
            <person name="Krishnakumar V."/>
            <person name="Chan A.P."/>
            <person name="Thibaud-Nissen F."/>
            <person name="Schobel S."/>
            <person name="Town C.D."/>
        </authorList>
    </citation>
    <scope>GENOME REANNOTATION</scope>
    <source>
        <strain>cv. Columbia</strain>
    </source>
</reference>
<reference key="5">
    <citation type="submission" date="2005-03" db="EMBL/GenBank/DDBJ databases">
        <title>Large-scale analysis of RIKEN Arabidopsis full-length (RAFL) cDNAs.</title>
        <authorList>
            <person name="Totoki Y."/>
            <person name="Seki M."/>
            <person name="Ishida J."/>
            <person name="Nakajima M."/>
            <person name="Enju A."/>
            <person name="Kamiya A."/>
            <person name="Narusaka M."/>
            <person name="Shin-i T."/>
            <person name="Nakagawa M."/>
            <person name="Sakamoto N."/>
            <person name="Oishi K."/>
            <person name="Kohara Y."/>
            <person name="Kobayashi M."/>
            <person name="Toyoda A."/>
            <person name="Sakaki Y."/>
            <person name="Sakurai T."/>
            <person name="Iida K."/>
            <person name="Akiyama K."/>
            <person name="Satou M."/>
            <person name="Toyoda T."/>
            <person name="Konagaya A."/>
            <person name="Carninci P."/>
            <person name="Kawai J."/>
            <person name="Hayashizaki Y."/>
            <person name="Shinozaki K."/>
        </authorList>
    </citation>
    <scope>NUCLEOTIDE SEQUENCE [LARGE SCALE MRNA] OF 497-961</scope>
    <source>
        <strain>cv. Columbia</strain>
    </source>
</reference>
<reference key="6">
    <citation type="journal article" date="2005" name="Plant Cell">
        <title>Transcriptional profile of the Arabidopsis root quiescent center.</title>
        <authorList>
            <person name="Nawy T."/>
            <person name="Lee J.Y."/>
            <person name="Colinas J."/>
            <person name="Wang J.Y."/>
            <person name="Thongrod S.C."/>
            <person name="Malamy J.E."/>
            <person name="Birnbaum K."/>
            <person name="Benfey P.N."/>
        </authorList>
    </citation>
    <scope>DEVELOPMENTAL STAGE</scope>
</reference>
<reference key="7">
    <citation type="journal article" date="2006" name="Plant Mol. Biol.">
        <title>The MYB transcription factor superfamily of Arabidopsis: expression analysis and phylogenetic comparison with the rice MYB family.</title>
        <authorList>
            <person name="Chen Y."/>
            <person name="Yang X."/>
            <person name="He K."/>
            <person name="Liu M."/>
            <person name="Li J."/>
            <person name="Gao Z."/>
            <person name="Lin Z."/>
            <person name="Zhang Y."/>
            <person name="Wang X."/>
            <person name="Qiu X."/>
            <person name="Shen Y."/>
            <person name="Zhang L."/>
            <person name="Deng X."/>
            <person name="Luo J."/>
            <person name="Deng X.-W."/>
            <person name="Chen Z."/>
            <person name="Gu H."/>
            <person name="Qu L.-J."/>
        </authorList>
    </citation>
    <scope>INDUCTION BY SALICYLIC ACID</scope>
    <scope>GENE FAMILY</scope>
</reference>
<reference key="8">
    <citation type="journal article" date="2007" name="Development">
        <title>R1R2R3-Myb proteins positively regulate cytokinesis through activation of KNOLLE transcription in Arabidopsis thaliana.</title>
        <authorList>
            <person name="Haga N."/>
            <person name="Kato K."/>
            <person name="Murase M."/>
            <person name="Araki S."/>
            <person name="Kubo M."/>
            <person name="Demura T."/>
            <person name="Suzuki K."/>
            <person name="Mueller I."/>
            <person name="Voss U."/>
            <person name="Juergens G."/>
            <person name="Ito M."/>
        </authorList>
    </citation>
    <scope>FUNCTION</scope>
    <scope>DISRUPTION PHENOTYPE</scope>
    <scope>INDUCTION</scope>
    <scope>TISSUE SPECIFICITY</scope>
    <scope>DEVELOPMENTAL STAGE</scope>
    <scope>GENE FAMILY</scope>
    <source>
        <strain>cv. Columbia</strain>
    </source>
</reference>
<reference key="9">
    <citation type="journal article" date="2010" name="Proc. Natl. Acad. Sci. U.S.A.">
        <title>Laser microdissection of Arabidopsis cells at the powdery mildew infection site reveals site-specific processes and regulators.</title>
        <authorList>
            <person name="Chandran D."/>
            <person name="Inada N."/>
            <person name="Hather G."/>
            <person name="Kleindt C.K."/>
            <person name="Wildermuth M.C."/>
        </authorList>
    </citation>
    <scope>FUNCTION</scope>
    <scope>DISRUPTION PHENOTYPE</scope>
    <scope>INDUCTION BY POWDERY MILDEW</scope>
    <source>
        <strain>cv. Columbia</strain>
    </source>
</reference>
<reference key="10">
    <citation type="journal article" date="2011" name="Plant Physiol.">
        <title>Mutations in MYB3R1 and MYB3R4 cause pleiotropic developmental defects and preferential down-regulation of multiple G2/M-specific genes in Arabidopsis.</title>
        <authorList>
            <person name="Haga N."/>
            <person name="Kobayashi K."/>
            <person name="Suzuki T."/>
            <person name="Maeo K."/>
            <person name="Kubo M."/>
            <person name="Ohtani M."/>
            <person name="Mitsuda N."/>
            <person name="Demura T."/>
            <person name="Nakamura K."/>
            <person name="Juergens G."/>
            <person name="Ito M."/>
        </authorList>
    </citation>
    <scope>FUNCTION</scope>
    <scope>DISRUPTION PHENOTYPE</scope>
    <source>
        <strain>cv. Columbia</strain>
    </source>
</reference>
<reference key="11">
    <citation type="journal article" date="2015" name="EMBO J.">
        <title>Transcriptional repression by MYB3R proteins regulates plant organ growth.</title>
        <authorList>
            <person name="Kobayashi K."/>
            <person name="Suzuki T."/>
            <person name="Iwata E."/>
            <person name="Nakamichi N."/>
            <person name="Suzuki T."/>
            <person name="Chen P."/>
            <person name="Ohtani M."/>
            <person name="Ishida T."/>
            <person name="Hosoya H."/>
            <person name="Mueller S."/>
            <person name="Leviczky T."/>
            <person name="Pettko-Szandtner A."/>
            <person name="Darula Z."/>
            <person name="Iwamoto A."/>
            <person name="Nomoto M."/>
            <person name="Tada Y."/>
            <person name="Higashiyama T."/>
            <person name="Demura T."/>
            <person name="Doonan J.H."/>
            <person name="Hauser M.T."/>
            <person name="Sugimoto K."/>
            <person name="Umeda M."/>
            <person name="Magyar Z."/>
            <person name="Boegre L."/>
            <person name="Ito M."/>
        </authorList>
    </citation>
    <scope>INTERACTION WITH CDKA-1; RBR1 AND E2FB</scope>
    <scope>DEVELOPMENTAL STAGE</scope>
    <source>
        <strain>cv. Columbia</strain>
    </source>
</reference>
<reference key="12">
    <citation type="journal article" date="2015" name="Plant Signal. Behav.">
        <title>Genetic interaction between G2/M phase-specific transcription factor MYB3R4 and MAPKKK ANP3 for execution of cytokinesis in Arabidopsis thaliana.</title>
        <authorList>
            <person name="Saito T."/>
            <person name="Fujikawa H."/>
            <person name="Haga N."/>
            <person name="Suzuki T."/>
            <person name="Machida Y."/>
            <person name="Ito M."/>
        </authorList>
    </citation>
    <scope>FUNCTION</scope>
    <scope>DISRUPTION PHENOTYPE</scope>
    <source>
        <strain>cv. Columbia</strain>
        <strain>cv. Landsberg erecta</strain>
    </source>
</reference>
<evidence type="ECO:0000255" key="1">
    <source>
        <dbReference type="PROSITE-ProRule" id="PRU00625"/>
    </source>
</evidence>
<evidence type="ECO:0000255" key="2">
    <source>
        <dbReference type="PROSITE-ProRule" id="PRU00768"/>
    </source>
</evidence>
<evidence type="ECO:0000256" key="3">
    <source>
        <dbReference type="SAM" id="MobiDB-lite"/>
    </source>
</evidence>
<evidence type="ECO:0000269" key="4">
    <source>
    </source>
</evidence>
<evidence type="ECO:0000269" key="5">
    <source>
    </source>
</evidence>
<evidence type="ECO:0000269" key="6">
    <source>
    </source>
</evidence>
<evidence type="ECO:0000269" key="7">
    <source>
    </source>
</evidence>
<evidence type="ECO:0000269" key="8">
    <source>
    </source>
</evidence>
<evidence type="ECO:0000269" key="9">
    <source>
    </source>
</evidence>
<evidence type="ECO:0000269" key="10">
    <source>
    </source>
</evidence>
<evidence type="ECO:0000303" key="11">
    <source>
    </source>
</evidence>
<evidence type="ECO:0000303" key="12">
    <source>
    </source>
</evidence>
<evidence type="ECO:0000305" key="13"/>
<evidence type="ECO:0000312" key="14">
    <source>
        <dbReference type="Araport" id="AT5G11510"/>
    </source>
</evidence>
<evidence type="ECO:0000312" key="15">
    <source>
        <dbReference type="EMBL" id="CAB87711.1"/>
    </source>
</evidence>
<organism>
    <name type="scientific">Arabidopsis thaliana</name>
    <name type="common">Mouse-ear cress</name>
    <dbReference type="NCBI Taxonomy" id="3702"/>
    <lineage>
        <taxon>Eukaryota</taxon>
        <taxon>Viridiplantae</taxon>
        <taxon>Streptophyta</taxon>
        <taxon>Embryophyta</taxon>
        <taxon>Tracheophyta</taxon>
        <taxon>Spermatophyta</taxon>
        <taxon>Magnoliopsida</taxon>
        <taxon>eudicotyledons</taxon>
        <taxon>Gunneridae</taxon>
        <taxon>Pentapetalae</taxon>
        <taxon>rosids</taxon>
        <taxon>malvids</taxon>
        <taxon>Brassicales</taxon>
        <taxon>Brassicaceae</taxon>
        <taxon>Camelineae</taxon>
        <taxon>Arabidopsis</taxon>
    </lineage>
</organism>
<feature type="chain" id="PRO_0000438894" description="Transcription factor MYB3R-4">
    <location>
        <begin position="1"/>
        <end position="961"/>
    </location>
</feature>
<feature type="domain" description="HTH myb-type 1" evidence="1">
    <location>
        <begin position="24"/>
        <end position="75"/>
    </location>
</feature>
<feature type="domain" description="HTH myb-type 2" evidence="1">
    <location>
        <begin position="76"/>
        <end position="131"/>
    </location>
</feature>
<feature type="domain" description="HTH myb-type 3" evidence="1">
    <location>
        <begin position="132"/>
        <end position="182"/>
    </location>
</feature>
<feature type="DNA-binding region" description="H-T-H motif" evidence="1">
    <location>
        <begin position="52"/>
        <end position="75"/>
    </location>
</feature>
<feature type="DNA-binding region" description="H-T-H motif" evidence="1">
    <location>
        <begin position="104"/>
        <end position="127"/>
    </location>
</feature>
<feature type="DNA-binding region" description="H-T-H motif" evidence="1">
    <location>
        <begin position="155"/>
        <end position="178"/>
    </location>
</feature>
<feature type="region of interest" description="Disordered" evidence="3">
    <location>
        <begin position="1"/>
        <end position="33"/>
    </location>
</feature>
<feature type="region of interest" description="Disordered" evidence="3">
    <location>
        <begin position="390"/>
        <end position="457"/>
    </location>
</feature>
<feature type="region of interest" description="Disordered" evidence="3">
    <location>
        <begin position="534"/>
        <end position="555"/>
    </location>
</feature>
<feature type="region of interest" description="Disordered" evidence="3">
    <location>
        <begin position="756"/>
        <end position="781"/>
    </location>
</feature>
<feature type="short sequence motif" description="Nuclear localization signal" evidence="2">
    <location>
        <begin position="612"/>
        <end position="619"/>
    </location>
</feature>
<feature type="compositionally biased region" description="Polar residues" evidence="3">
    <location>
        <begin position="391"/>
        <end position="405"/>
    </location>
</feature>
<feature type="compositionally biased region" description="Polar residues" evidence="3">
    <location>
        <begin position="416"/>
        <end position="430"/>
    </location>
</feature>
<feature type="compositionally biased region" description="Low complexity" evidence="3">
    <location>
        <begin position="431"/>
        <end position="444"/>
    </location>
</feature>
<feature type="compositionally biased region" description="Basic and acidic residues" evidence="3">
    <location>
        <begin position="534"/>
        <end position="554"/>
    </location>
</feature>
<feature type="compositionally biased region" description="Polar residues" evidence="3">
    <location>
        <begin position="764"/>
        <end position="781"/>
    </location>
</feature>
<gene>
    <name evidence="11" type="primary">MYB3R4</name>
    <name evidence="12" type="synonym">EDC</name>
    <name evidence="14" type="ordered locus">At5g11510</name>
    <name evidence="15" type="ORF">F15N18.100</name>
</gene>
<protein>
    <recommendedName>
        <fullName evidence="11">Transcription factor MYB3R-4</fullName>
    </recommendedName>
    <alternativeName>
        <fullName evidence="11">Myb-related protein 3R-4</fullName>
    </alternativeName>
    <alternativeName>
        <fullName evidence="12">Protein ENHANCED DEFECTIVE CYTOKINESIS</fullName>
    </alternativeName>
</protein>
<accession>Q94FL9</accession>
<accession>Q56WW6</accession>
<accession>Q9LYE0</accession>
<dbReference type="EMBL" id="AF371975">
    <property type="protein sequence ID" value="AAK54739.2"/>
    <property type="molecule type" value="mRNA"/>
</dbReference>
<dbReference type="EMBL" id="AY519650">
    <property type="protein sequence ID" value="AAS10120.1"/>
    <property type="molecule type" value="mRNA"/>
</dbReference>
<dbReference type="EMBL" id="AL163815">
    <property type="protein sequence ID" value="CAB87711.1"/>
    <property type="status" value="ALT_SEQ"/>
    <property type="molecule type" value="Genomic_DNA"/>
</dbReference>
<dbReference type="EMBL" id="CP002688">
    <property type="protein sequence ID" value="AED91689.1"/>
    <property type="molecule type" value="Genomic_DNA"/>
</dbReference>
<dbReference type="EMBL" id="CP002688">
    <property type="protein sequence ID" value="ANM68601.1"/>
    <property type="molecule type" value="Genomic_DNA"/>
</dbReference>
<dbReference type="EMBL" id="CP002688">
    <property type="protein sequence ID" value="ANM68602.1"/>
    <property type="molecule type" value="Genomic_DNA"/>
</dbReference>
<dbReference type="EMBL" id="AK221914">
    <property type="protein sequence ID" value="BAD94312.1"/>
    <property type="molecule type" value="mRNA"/>
</dbReference>
<dbReference type="PIR" id="T48510">
    <property type="entry name" value="T48510"/>
</dbReference>
<dbReference type="RefSeq" id="NP_001330337.1">
    <molecule id="Q94FL9-1"/>
    <property type="nucleotide sequence ID" value="NM_001343197.1"/>
</dbReference>
<dbReference type="RefSeq" id="NP_001330338.1">
    <molecule id="Q94FL9-1"/>
    <property type="nucleotide sequence ID" value="NM_001343198.1"/>
</dbReference>
<dbReference type="RefSeq" id="NP_568249.1">
    <molecule id="Q94FL9-1"/>
    <property type="nucleotide sequence ID" value="NM_121189.4"/>
</dbReference>
<dbReference type="SMR" id="Q94FL9"/>
<dbReference type="FunCoup" id="Q94FL9">
    <property type="interactions" value="575"/>
</dbReference>
<dbReference type="STRING" id="3702.Q94FL9"/>
<dbReference type="GlyGen" id="Q94FL9">
    <property type="glycosylation" value="1 site"/>
</dbReference>
<dbReference type="iPTMnet" id="Q94FL9"/>
<dbReference type="PaxDb" id="3702-AT5G11510.1"/>
<dbReference type="ProteomicsDB" id="238822">
    <molecule id="Q94FL9-1"/>
</dbReference>
<dbReference type="EnsemblPlants" id="AT5G11510.1">
    <molecule id="Q94FL9-1"/>
    <property type="protein sequence ID" value="AT5G11510.1"/>
    <property type="gene ID" value="AT5G11510"/>
</dbReference>
<dbReference type="EnsemblPlants" id="AT5G11510.3">
    <molecule id="Q94FL9-1"/>
    <property type="protein sequence ID" value="AT5G11510.3"/>
    <property type="gene ID" value="AT5G11510"/>
</dbReference>
<dbReference type="EnsemblPlants" id="AT5G11510.4">
    <molecule id="Q94FL9-1"/>
    <property type="protein sequence ID" value="AT5G11510.4"/>
    <property type="gene ID" value="AT5G11510"/>
</dbReference>
<dbReference type="GeneID" id="831023"/>
<dbReference type="Gramene" id="AT5G11510.1">
    <molecule id="Q94FL9-1"/>
    <property type="protein sequence ID" value="AT5G11510.1"/>
    <property type="gene ID" value="AT5G11510"/>
</dbReference>
<dbReference type="Gramene" id="AT5G11510.3">
    <molecule id="Q94FL9-1"/>
    <property type="protein sequence ID" value="AT5G11510.3"/>
    <property type="gene ID" value="AT5G11510"/>
</dbReference>
<dbReference type="Gramene" id="AT5G11510.4">
    <molecule id="Q94FL9-1"/>
    <property type="protein sequence ID" value="AT5G11510.4"/>
    <property type="gene ID" value="AT5G11510"/>
</dbReference>
<dbReference type="KEGG" id="ath:AT5G11510"/>
<dbReference type="Araport" id="AT5G11510"/>
<dbReference type="TAIR" id="AT5G11510">
    <property type="gene designation" value="MYB3R-4"/>
</dbReference>
<dbReference type="eggNOG" id="KOG0048">
    <property type="taxonomic scope" value="Eukaryota"/>
</dbReference>
<dbReference type="HOGENOM" id="CLU_016150_0_1_1"/>
<dbReference type="InParanoid" id="Q94FL9"/>
<dbReference type="OMA" id="QTCMEAN"/>
<dbReference type="PhylomeDB" id="Q94FL9"/>
<dbReference type="PRO" id="PR:Q94FL9"/>
<dbReference type="Proteomes" id="UP000006548">
    <property type="component" value="Chromosome 5"/>
</dbReference>
<dbReference type="ExpressionAtlas" id="Q94FL9">
    <property type="expression patterns" value="baseline and differential"/>
</dbReference>
<dbReference type="GO" id="GO:0005634">
    <property type="term" value="C:nucleus"/>
    <property type="evidence" value="ECO:0007669"/>
    <property type="project" value="UniProtKB-SubCell"/>
</dbReference>
<dbReference type="GO" id="GO:0009524">
    <property type="term" value="C:phragmoplast"/>
    <property type="evidence" value="ECO:0000314"/>
    <property type="project" value="TAIR"/>
</dbReference>
<dbReference type="GO" id="GO:0005819">
    <property type="term" value="C:spindle"/>
    <property type="evidence" value="ECO:0000314"/>
    <property type="project" value="TAIR"/>
</dbReference>
<dbReference type="GO" id="GO:0001228">
    <property type="term" value="F:DNA-binding transcription activator activity, RNA polymerase II-specific"/>
    <property type="evidence" value="ECO:0000314"/>
    <property type="project" value="TAIR"/>
</dbReference>
<dbReference type="GO" id="GO:0003700">
    <property type="term" value="F:DNA-binding transcription factor activity"/>
    <property type="evidence" value="ECO:0000250"/>
    <property type="project" value="TAIR"/>
</dbReference>
<dbReference type="GO" id="GO:0043565">
    <property type="term" value="F:sequence-specific DNA binding"/>
    <property type="evidence" value="ECO:0000314"/>
    <property type="project" value="UniProtKB"/>
</dbReference>
<dbReference type="GO" id="GO:0000976">
    <property type="term" value="F:transcription cis-regulatory region binding"/>
    <property type="evidence" value="ECO:0000353"/>
    <property type="project" value="TAIR"/>
</dbReference>
<dbReference type="GO" id="GO:0050832">
    <property type="term" value="P:defense response to fungus"/>
    <property type="evidence" value="ECO:0000315"/>
    <property type="project" value="UniProtKB"/>
</dbReference>
<dbReference type="GO" id="GO:1901181">
    <property type="term" value="P:negative regulation of cellular response to caffeine"/>
    <property type="evidence" value="ECO:0000315"/>
    <property type="project" value="UniProtKB"/>
</dbReference>
<dbReference type="GO" id="GO:0045893">
    <property type="term" value="P:positive regulation of DNA-templated transcription"/>
    <property type="evidence" value="ECO:0000315"/>
    <property type="project" value="UniProtKB"/>
</dbReference>
<dbReference type="GO" id="GO:0032465">
    <property type="term" value="P:regulation of cytokinesis"/>
    <property type="evidence" value="ECO:0000315"/>
    <property type="project" value="UniProtKB"/>
</dbReference>
<dbReference type="GO" id="GO:0032875">
    <property type="term" value="P:regulation of DNA endoreduplication"/>
    <property type="evidence" value="ECO:0000315"/>
    <property type="project" value="TAIR"/>
</dbReference>
<dbReference type="GO" id="GO:0006355">
    <property type="term" value="P:regulation of DNA-templated transcription"/>
    <property type="evidence" value="ECO:0000314"/>
    <property type="project" value="TAIR"/>
</dbReference>
<dbReference type="GO" id="GO:0009620">
    <property type="term" value="P:response to fungus"/>
    <property type="evidence" value="ECO:0000270"/>
    <property type="project" value="UniProtKB"/>
</dbReference>
<dbReference type="GO" id="GO:0009751">
    <property type="term" value="P:response to salicylic acid"/>
    <property type="evidence" value="ECO:0000270"/>
    <property type="project" value="UniProtKB"/>
</dbReference>
<dbReference type="CDD" id="cd00167">
    <property type="entry name" value="SANT"/>
    <property type="match status" value="3"/>
</dbReference>
<dbReference type="FunFam" id="1.10.10.60:FF:000324">
    <property type="entry name" value="Transcription factor MYB3R-2"/>
    <property type="match status" value="1"/>
</dbReference>
<dbReference type="FunFam" id="1.10.10.60:FF:000010">
    <property type="entry name" value="Transcriptional activator Myb isoform A"/>
    <property type="match status" value="1"/>
</dbReference>
<dbReference type="FunFam" id="1.10.10.60:FF:000016">
    <property type="entry name" value="Transcriptional activator Myb isoform A"/>
    <property type="match status" value="1"/>
</dbReference>
<dbReference type="Gene3D" id="1.10.10.60">
    <property type="entry name" value="Homeodomain-like"/>
    <property type="match status" value="3"/>
</dbReference>
<dbReference type="InterPro" id="IPR009057">
    <property type="entry name" value="Homeodomain-like_sf"/>
</dbReference>
<dbReference type="InterPro" id="IPR017930">
    <property type="entry name" value="Myb_dom"/>
</dbReference>
<dbReference type="InterPro" id="IPR050560">
    <property type="entry name" value="MYB_TF"/>
</dbReference>
<dbReference type="InterPro" id="IPR001005">
    <property type="entry name" value="SANT/Myb"/>
</dbReference>
<dbReference type="PANTHER" id="PTHR45614">
    <property type="entry name" value="MYB PROTEIN-RELATED"/>
    <property type="match status" value="1"/>
</dbReference>
<dbReference type="Pfam" id="PF00249">
    <property type="entry name" value="Myb_DNA-binding"/>
    <property type="match status" value="3"/>
</dbReference>
<dbReference type="SMART" id="SM00717">
    <property type="entry name" value="SANT"/>
    <property type="match status" value="3"/>
</dbReference>
<dbReference type="SUPFAM" id="SSF46689">
    <property type="entry name" value="Homeodomain-like"/>
    <property type="match status" value="2"/>
</dbReference>
<dbReference type="PROSITE" id="PS51294">
    <property type="entry name" value="HTH_MYB"/>
    <property type="match status" value="3"/>
</dbReference>
<keyword id="KW-0010">Activator</keyword>
<keyword id="KW-0025">Alternative splicing</keyword>
<keyword id="KW-0238">DNA-binding</keyword>
<keyword id="KW-0539">Nucleus</keyword>
<keyword id="KW-1185">Reference proteome</keyword>
<keyword id="KW-0677">Repeat</keyword>
<keyword id="KW-0804">Transcription</keyword>
<keyword id="KW-0805">Transcription regulation</keyword>